<comment type="function">
    <text evidence="2">GTP hydrolase that promotes the GTP-dependent binding of aminoacyl-tRNA to the A-site of ribosomes during protein biosynthesis.</text>
</comment>
<comment type="catalytic activity">
    <reaction evidence="2">
        <text>GTP + H2O = GDP + phosphate + H(+)</text>
        <dbReference type="Rhea" id="RHEA:19669"/>
        <dbReference type="ChEBI" id="CHEBI:15377"/>
        <dbReference type="ChEBI" id="CHEBI:15378"/>
        <dbReference type="ChEBI" id="CHEBI:37565"/>
        <dbReference type="ChEBI" id="CHEBI:43474"/>
        <dbReference type="ChEBI" id="CHEBI:58189"/>
        <dbReference type="EC" id="3.6.5.3"/>
    </reaction>
    <physiologicalReaction direction="left-to-right" evidence="2">
        <dbReference type="Rhea" id="RHEA:19670"/>
    </physiologicalReaction>
</comment>
<comment type="subunit">
    <text evidence="2">Monomer.</text>
</comment>
<comment type="subcellular location">
    <subcellularLocation>
        <location evidence="2">Cytoplasm</location>
    </subcellularLocation>
</comment>
<comment type="similarity">
    <text evidence="2">Belongs to the TRAFAC class translation factor GTPase superfamily. Classic translation factor GTPase family. EF-Tu/EF-1A subfamily.</text>
</comment>
<keyword id="KW-0963">Cytoplasm</keyword>
<keyword id="KW-0251">Elongation factor</keyword>
<keyword id="KW-0342">GTP-binding</keyword>
<keyword id="KW-0378">Hydrolase</keyword>
<keyword id="KW-0460">Magnesium</keyword>
<keyword id="KW-0479">Metal-binding</keyword>
<keyword id="KW-0547">Nucleotide-binding</keyword>
<keyword id="KW-0648">Protein biosynthesis</keyword>
<organism>
    <name type="scientific">Bartonella bacilliformis (strain ATCC 35685 / KC583 / Herrer 020/F12,63)</name>
    <dbReference type="NCBI Taxonomy" id="360095"/>
    <lineage>
        <taxon>Bacteria</taxon>
        <taxon>Pseudomonadati</taxon>
        <taxon>Pseudomonadota</taxon>
        <taxon>Alphaproteobacteria</taxon>
        <taxon>Hyphomicrobiales</taxon>
        <taxon>Bartonellaceae</taxon>
        <taxon>Bartonella</taxon>
    </lineage>
</organism>
<reference key="1">
    <citation type="submission" date="2006-12" db="EMBL/GenBank/DDBJ databases">
        <authorList>
            <person name="Hendrix L."/>
            <person name="Mohamoud Y."/>
            <person name="Radune D."/>
            <person name="Shvartsbeyn A."/>
            <person name="Daugherty S."/>
            <person name="Dodson R."/>
            <person name="Durkin A.S."/>
            <person name="Harkins D."/>
            <person name="Huot H."/>
            <person name="Kothari S.P."/>
            <person name="Madupu R."/>
            <person name="Li J."/>
            <person name="Nelson W.C."/>
            <person name="Shrivastava S."/>
            <person name="Giglio M.G."/>
            <person name="Haft D."/>
            <person name="Selengut J."/>
            <person name="Fraser-Ligget C."/>
            <person name="Seshadri R."/>
        </authorList>
    </citation>
    <scope>NUCLEOTIDE SEQUENCE [LARGE SCALE GENOMIC DNA]</scope>
    <source>
        <strain>ATCC 35685 / KC583 / Herrer 020/F12,63</strain>
    </source>
</reference>
<proteinExistence type="inferred from homology"/>
<sequence>MAKSKFERTKPHVNIGTIGHVDHGKTSLTAAITKYFGEFKAYDQIDAAPEERARGITISTAHVEYETDQRHYAHVDCPGHADYVKNMITGAAQMDGAILVVSAADGPMPQTREHILLARQVGVPAIVVFLNKVDQVDDAELLELVELEVRELLSKYDFPGDDIPIVKGSALAALEDSDKSIGEDAVRLLMSEVDRYIPTPERPVDQSFLMPIEDVFSISGRGTVVTGRVERGVVKVGEEIEIVGIRPTSKTTVTGVEMFRKLLDQGQAGDNIGALLRGIDREGIERGQVLAKPGSVTPHTKFKAEAYILTKDEGGRHTPFFTNYRPQFYFRTTDVTGIVTLPEGTEMVMPGDNVAMDVSLIVPIAMEEKLRFAIREGGRTVGAGIVSKIIE</sequence>
<feature type="chain" id="PRO_0000337321" description="Elongation factor Tu 2">
    <location>
        <begin position="1"/>
        <end position="391"/>
    </location>
</feature>
<feature type="domain" description="tr-type G">
    <location>
        <begin position="10"/>
        <end position="201"/>
    </location>
</feature>
<feature type="region of interest" description="G1" evidence="1">
    <location>
        <begin position="19"/>
        <end position="26"/>
    </location>
</feature>
<feature type="region of interest" description="G2" evidence="1">
    <location>
        <begin position="55"/>
        <end position="59"/>
    </location>
</feature>
<feature type="region of interest" description="G3" evidence="1">
    <location>
        <begin position="76"/>
        <end position="79"/>
    </location>
</feature>
<feature type="region of interest" description="G4" evidence="1">
    <location>
        <begin position="131"/>
        <end position="134"/>
    </location>
</feature>
<feature type="region of interest" description="G5" evidence="1">
    <location>
        <begin position="169"/>
        <end position="171"/>
    </location>
</feature>
<feature type="binding site" evidence="2">
    <location>
        <begin position="19"/>
        <end position="26"/>
    </location>
    <ligand>
        <name>GTP</name>
        <dbReference type="ChEBI" id="CHEBI:37565"/>
    </ligand>
</feature>
<feature type="binding site" evidence="2">
    <location>
        <position position="26"/>
    </location>
    <ligand>
        <name>Mg(2+)</name>
        <dbReference type="ChEBI" id="CHEBI:18420"/>
    </ligand>
</feature>
<feature type="binding site" evidence="2">
    <location>
        <begin position="76"/>
        <end position="80"/>
    </location>
    <ligand>
        <name>GTP</name>
        <dbReference type="ChEBI" id="CHEBI:37565"/>
    </ligand>
</feature>
<feature type="binding site" evidence="2">
    <location>
        <begin position="131"/>
        <end position="134"/>
    </location>
    <ligand>
        <name>GTP</name>
        <dbReference type="ChEBI" id="CHEBI:37565"/>
    </ligand>
</feature>
<accession>A1USL2</accession>
<gene>
    <name evidence="2" type="primary">tuf2</name>
    <name type="ordered locus">BARBAKC583_0664</name>
</gene>
<gene>
    <name evidence="2" type="primary">tuf3</name>
    <name type="ordered locus">BARBAKC583_0696</name>
</gene>
<protein>
    <recommendedName>
        <fullName evidence="2">Elongation factor Tu 2</fullName>
        <shortName evidence="2">EF-Tu 2</shortName>
        <ecNumber evidence="2">3.6.5.3</ecNumber>
    </recommendedName>
</protein>
<dbReference type="EC" id="3.6.5.3" evidence="2"/>
<dbReference type="EMBL" id="CP000524">
    <property type="protein sequence ID" value="ABM44569.1"/>
    <property type="molecule type" value="Genomic_DNA"/>
</dbReference>
<dbReference type="EMBL" id="CP000524">
    <property type="protein sequence ID" value="ABM45676.1"/>
    <property type="molecule type" value="Genomic_DNA"/>
</dbReference>
<dbReference type="SMR" id="A1USL2"/>
<dbReference type="STRING" id="360095.BARBAKC583_0664"/>
<dbReference type="GeneID" id="4684260"/>
<dbReference type="KEGG" id="bbk:BARBAKC583_0664"/>
<dbReference type="KEGG" id="bbk:BARBAKC583_0696"/>
<dbReference type="PATRIC" id="fig|360095.6.peg.675"/>
<dbReference type="eggNOG" id="COG0050">
    <property type="taxonomic scope" value="Bacteria"/>
</dbReference>
<dbReference type="HOGENOM" id="CLU_007265_0_1_5"/>
<dbReference type="OrthoDB" id="9803139at2"/>
<dbReference type="Proteomes" id="UP000000643">
    <property type="component" value="Chromosome"/>
</dbReference>
<dbReference type="GO" id="GO:0005829">
    <property type="term" value="C:cytosol"/>
    <property type="evidence" value="ECO:0007669"/>
    <property type="project" value="TreeGrafter"/>
</dbReference>
<dbReference type="GO" id="GO:0005525">
    <property type="term" value="F:GTP binding"/>
    <property type="evidence" value="ECO:0007669"/>
    <property type="project" value="UniProtKB-UniRule"/>
</dbReference>
<dbReference type="GO" id="GO:0003924">
    <property type="term" value="F:GTPase activity"/>
    <property type="evidence" value="ECO:0007669"/>
    <property type="project" value="InterPro"/>
</dbReference>
<dbReference type="GO" id="GO:0097216">
    <property type="term" value="F:guanosine tetraphosphate binding"/>
    <property type="evidence" value="ECO:0007669"/>
    <property type="project" value="UniProtKB-ARBA"/>
</dbReference>
<dbReference type="GO" id="GO:0003746">
    <property type="term" value="F:translation elongation factor activity"/>
    <property type="evidence" value="ECO:0007669"/>
    <property type="project" value="UniProtKB-UniRule"/>
</dbReference>
<dbReference type="CDD" id="cd01884">
    <property type="entry name" value="EF_Tu"/>
    <property type="match status" value="1"/>
</dbReference>
<dbReference type="CDD" id="cd03697">
    <property type="entry name" value="EFTU_II"/>
    <property type="match status" value="1"/>
</dbReference>
<dbReference type="CDD" id="cd03707">
    <property type="entry name" value="EFTU_III"/>
    <property type="match status" value="1"/>
</dbReference>
<dbReference type="FunFam" id="2.40.30.10:FF:000001">
    <property type="entry name" value="Elongation factor Tu"/>
    <property type="match status" value="1"/>
</dbReference>
<dbReference type="FunFam" id="3.40.50.300:FF:000003">
    <property type="entry name" value="Elongation factor Tu"/>
    <property type="match status" value="1"/>
</dbReference>
<dbReference type="Gene3D" id="3.40.50.300">
    <property type="entry name" value="P-loop containing nucleotide triphosphate hydrolases"/>
    <property type="match status" value="1"/>
</dbReference>
<dbReference type="Gene3D" id="2.40.30.10">
    <property type="entry name" value="Translation factors"/>
    <property type="match status" value="2"/>
</dbReference>
<dbReference type="HAMAP" id="MF_00118_B">
    <property type="entry name" value="EF_Tu_B"/>
    <property type="match status" value="1"/>
</dbReference>
<dbReference type="InterPro" id="IPR041709">
    <property type="entry name" value="EF-Tu_GTP-bd"/>
</dbReference>
<dbReference type="InterPro" id="IPR050055">
    <property type="entry name" value="EF-Tu_GTPase"/>
</dbReference>
<dbReference type="InterPro" id="IPR004161">
    <property type="entry name" value="EFTu-like_2"/>
</dbReference>
<dbReference type="InterPro" id="IPR033720">
    <property type="entry name" value="EFTU_2"/>
</dbReference>
<dbReference type="InterPro" id="IPR031157">
    <property type="entry name" value="G_TR_CS"/>
</dbReference>
<dbReference type="InterPro" id="IPR027417">
    <property type="entry name" value="P-loop_NTPase"/>
</dbReference>
<dbReference type="InterPro" id="IPR005225">
    <property type="entry name" value="Small_GTP-bd"/>
</dbReference>
<dbReference type="InterPro" id="IPR000795">
    <property type="entry name" value="T_Tr_GTP-bd_dom"/>
</dbReference>
<dbReference type="InterPro" id="IPR009000">
    <property type="entry name" value="Transl_B-barrel_sf"/>
</dbReference>
<dbReference type="InterPro" id="IPR009001">
    <property type="entry name" value="Transl_elong_EF1A/Init_IF2_C"/>
</dbReference>
<dbReference type="InterPro" id="IPR004541">
    <property type="entry name" value="Transl_elong_EFTu/EF1A_bac/org"/>
</dbReference>
<dbReference type="InterPro" id="IPR004160">
    <property type="entry name" value="Transl_elong_EFTu/EF1A_C"/>
</dbReference>
<dbReference type="NCBIfam" id="TIGR00485">
    <property type="entry name" value="EF-Tu"/>
    <property type="match status" value="1"/>
</dbReference>
<dbReference type="NCBIfam" id="NF000766">
    <property type="entry name" value="PRK00049.1"/>
    <property type="match status" value="1"/>
</dbReference>
<dbReference type="NCBIfam" id="NF009372">
    <property type="entry name" value="PRK12735.1"/>
    <property type="match status" value="1"/>
</dbReference>
<dbReference type="NCBIfam" id="NF009373">
    <property type="entry name" value="PRK12736.1"/>
    <property type="match status" value="1"/>
</dbReference>
<dbReference type="NCBIfam" id="TIGR00231">
    <property type="entry name" value="small_GTP"/>
    <property type="match status" value="1"/>
</dbReference>
<dbReference type="PANTHER" id="PTHR43721:SF22">
    <property type="entry name" value="ELONGATION FACTOR TU, MITOCHONDRIAL"/>
    <property type="match status" value="1"/>
</dbReference>
<dbReference type="PANTHER" id="PTHR43721">
    <property type="entry name" value="ELONGATION FACTOR TU-RELATED"/>
    <property type="match status" value="1"/>
</dbReference>
<dbReference type="Pfam" id="PF00009">
    <property type="entry name" value="GTP_EFTU"/>
    <property type="match status" value="1"/>
</dbReference>
<dbReference type="Pfam" id="PF03144">
    <property type="entry name" value="GTP_EFTU_D2"/>
    <property type="match status" value="1"/>
</dbReference>
<dbReference type="Pfam" id="PF03143">
    <property type="entry name" value="GTP_EFTU_D3"/>
    <property type="match status" value="1"/>
</dbReference>
<dbReference type="PRINTS" id="PR00315">
    <property type="entry name" value="ELONGATNFCT"/>
</dbReference>
<dbReference type="SUPFAM" id="SSF50465">
    <property type="entry name" value="EF-Tu/eEF-1alpha/eIF2-gamma C-terminal domain"/>
    <property type="match status" value="1"/>
</dbReference>
<dbReference type="SUPFAM" id="SSF52540">
    <property type="entry name" value="P-loop containing nucleoside triphosphate hydrolases"/>
    <property type="match status" value="1"/>
</dbReference>
<dbReference type="SUPFAM" id="SSF50447">
    <property type="entry name" value="Translation proteins"/>
    <property type="match status" value="1"/>
</dbReference>
<dbReference type="PROSITE" id="PS00301">
    <property type="entry name" value="G_TR_1"/>
    <property type="match status" value="1"/>
</dbReference>
<dbReference type="PROSITE" id="PS51722">
    <property type="entry name" value="G_TR_2"/>
    <property type="match status" value="1"/>
</dbReference>
<evidence type="ECO:0000250" key="1"/>
<evidence type="ECO:0000255" key="2">
    <source>
        <dbReference type="HAMAP-Rule" id="MF_00118"/>
    </source>
</evidence>
<name>EFTU2_BARBK</name>